<reference key="1">
    <citation type="submission" date="2009-01" db="EMBL/GenBank/DDBJ databases">
        <title>Complete sequence of Anaeromyxobacter dehalogenans 2CP-1.</title>
        <authorList>
            <person name="Lucas S."/>
            <person name="Copeland A."/>
            <person name="Lapidus A."/>
            <person name="Glavina del Rio T."/>
            <person name="Dalin E."/>
            <person name="Tice H."/>
            <person name="Bruce D."/>
            <person name="Goodwin L."/>
            <person name="Pitluck S."/>
            <person name="Saunders E."/>
            <person name="Brettin T."/>
            <person name="Detter J.C."/>
            <person name="Han C."/>
            <person name="Larimer F."/>
            <person name="Land M."/>
            <person name="Hauser L."/>
            <person name="Kyrpides N."/>
            <person name="Ovchinnikova G."/>
            <person name="Beliaev A.S."/>
            <person name="Richardson P."/>
        </authorList>
    </citation>
    <scope>NUCLEOTIDE SEQUENCE [LARGE SCALE GENOMIC DNA]</scope>
    <source>
        <strain>2CP-1 / ATCC BAA-258</strain>
    </source>
</reference>
<keyword id="KW-0227">DNA damage</keyword>
<keyword id="KW-0234">DNA repair</keyword>
<keyword id="KW-0235">DNA replication</keyword>
<keyword id="KW-0436">Ligase</keyword>
<keyword id="KW-0460">Magnesium</keyword>
<keyword id="KW-0464">Manganese</keyword>
<keyword id="KW-0479">Metal-binding</keyword>
<keyword id="KW-0520">NAD</keyword>
<keyword id="KW-0862">Zinc</keyword>
<sequence>MKKADASARARELRDRIRAADHAYYVLDQPLLADAEYDRLMHELQALEAEHPELVTADSPTQRVSGAPSERFERVVHREPMLSLGNVQSDDELHEFDARVRRLLGLPDGEPVGYVVEPKLDGLAVELVYRDGAFTSGSTRGDGVNGEDVTANLRVVGGLGANRGVPHALEGRPPPRVEVRGEVLLFKEHFEAMNRQLVRAGEEPFANPRNAAAGTLRQLDWRVTARRPLSFIAYEALLPGGDPWRTHWEKLEELAAWGFETNAENRRCRGLAEVLAYRDRMAERRFELPYDTDGIVVKVDDLDWRRRLGAASKFPRWAVAFKYPPQEEATRIRRIWASVGRTGVLTPVVDFDPVRLSGAMVARATLHNEDEMRRKDILEGDWVLVRRAGEVIPEVVKPLPERRTGAEQPFRFPAECPVCGARVVREEGEKVYRCTGAACPAQLVGRLCHFAQRRALDIEGLGEKLAAGLVERGQVKDFADLYAVPFEVWQQLFSRPRKEQDAGAARELPEKSAQNMVAALERSRKTTLRRFLFALGIPQVGEATAATLARHFGDLARVMDADEEALKGVRDVGPETAAEIRAWTQEPQNRRVVERLLAAGVTPEAEVVEARGPFAGKTVVLTGGLSTMSRDDAKAEIERRGGKVSGSVSRKTYLVVAGEDAGSKLEKARSLGVRIAGEEEFVRLLKE</sequence>
<proteinExistence type="inferred from homology"/>
<accession>B8JD56</accession>
<evidence type="ECO:0000255" key="1">
    <source>
        <dbReference type="HAMAP-Rule" id="MF_01588"/>
    </source>
</evidence>
<dbReference type="EC" id="6.5.1.2" evidence="1"/>
<dbReference type="EMBL" id="CP001359">
    <property type="protein sequence ID" value="ACL64084.1"/>
    <property type="molecule type" value="Genomic_DNA"/>
</dbReference>
<dbReference type="RefSeq" id="WP_012632112.1">
    <property type="nucleotide sequence ID" value="NC_011891.1"/>
</dbReference>
<dbReference type="SMR" id="B8JD56"/>
<dbReference type="KEGG" id="acp:A2cp1_0729"/>
<dbReference type="HOGENOM" id="CLU_007764_2_1_7"/>
<dbReference type="Proteomes" id="UP000007089">
    <property type="component" value="Chromosome"/>
</dbReference>
<dbReference type="GO" id="GO:0005829">
    <property type="term" value="C:cytosol"/>
    <property type="evidence" value="ECO:0007669"/>
    <property type="project" value="TreeGrafter"/>
</dbReference>
<dbReference type="GO" id="GO:0003677">
    <property type="term" value="F:DNA binding"/>
    <property type="evidence" value="ECO:0007669"/>
    <property type="project" value="InterPro"/>
</dbReference>
<dbReference type="GO" id="GO:0003911">
    <property type="term" value="F:DNA ligase (NAD+) activity"/>
    <property type="evidence" value="ECO:0007669"/>
    <property type="project" value="UniProtKB-UniRule"/>
</dbReference>
<dbReference type="GO" id="GO:0046872">
    <property type="term" value="F:metal ion binding"/>
    <property type="evidence" value="ECO:0007669"/>
    <property type="project" value="UniProtKB-KW"/>
</dbReference>
<dbReference type="GO" id="GO:0006281">
    <property type="term" value="P:DNA repair"/>
    <property type="evidence" value="ECO:0007669"/>
    <property type="project" value="UniProtKB-KW"/>
</dbReference>
<dbReference type="GO" id="GO:0006260">
    <property type="term" value="P:DNA replication"/>
    <property type="evidence" value="ECO:0007669"/>
    <property type="project" value="UniProtKB-KW"/>
</dbReference>
<dbReference type="CDD" id="cd17748">
    <property type="entry name" value="BRCT_DNA_ligase_like"/>
    <property type="match status" value="1"/>
</dbReference>
<dbReference type="CDD" id="cd00114">
    <property type="entry name" value="LIGANc"/>
    <property type="match status" value="1"/>
</dbReference>
<dbReference type="FunFam" id="1.10.150.20:FF:000006">
    <property type="entry name" value="DNA ligase"/>
    <property type="match status" value="1"/>
</dbReference>
<dbReference type="FunFam" id="1.10.287.610:FF:000002">
    <property type="entry name" value="DNA ligase"/>
    <property type="match status" value="1"/>
</dbReference>
<dbReference type="FunFam" id="3.30.470.30:FF:000001">
    <property type="entry name" value="DNA ligase"/>
    <property type="match status" value="1"/>
</dbReference>
<dbReference type="Gene3D" id="6.20.10.30">
    <property type="match status" value="1"/>
</dbReference>
<dbReference type="Gene3D" id="1.10.150.20">
    <property type="entry name" value="5' to 3' exonuclease, C-terminal subdomain"/>
    <property type="match status" value="2"/>
</dbReference>
<dbReference type="Gene3D" id="3.40.50.10190">
    <property type="entry name" value="BRCT domain"/>
    <property type="match status" value="1"/>
</dbReference>
<dbReference type="Gene3D" id="3.30.470.30">
    <property type="entry name" value="DNA ligase/mRNA capping enzyme"/>
    <property type="match status" value="1"/>
</dbReference>
<dbReference type="Gene3D" id="1.10.287.610">
    <property type="entry name" value="Helix hairpin bin"/>
    <property type="match status" value="1"/>
</dbReference>
<dbReference type="Gene3D" id="2.40.50.140">
    <property type="entry name" value="Nucleic acid-binding proteins"/>
    <property type="match status" value="1"/>
</dbReference>
<dbReference type="HAMAP" id="MF_01588">
    <property type="entry name" value="DNA_ligase_A"/>
    <property type="match status" value="1"/>
</dbReference>
<dbReference type="InterPro" id="IPR001357">
    <property type="entry name" value="BRCT_dom"/>
</dbReference>
<dbReference type="InterPro" id="IPR036420">
    <property type="entry name" value="BRCT_dom_sf"/>
</dbReference>
<dbReference type="InterPro" id="IPR041663">
    <property type="entry name" value="DisA/LigA_HHH"/>
</dbReference>
<dbReference type="InterPro" id="IPR001679">
    <property type="entry name" value="DNA_ligase"/>
</dbReference>
<dbReference type="InterPro" id="IPR018239">
    <property type="entry name" value="DNA_ligase_AS"/>
</dbReference>
<dbReference type="InterPro" id="IPR033136">
    <property type="entry name" value="DNA_ligase_CS"/>
</dbReference>
<dbReference type="InterPro" id="IPR013839">
    <property type="entry name" value="DNAligase_adenylation"/>
</dbReference>
<dbReference type="InterPro" id="IPR013840">
    <property type="entry name" value="DNAligase_N"/>
</dbReference>
<dbReference type="InterPro" id="IPR003583">
    <property type="entry name" value="Hlx-hairpin-Hlx_DNA-bd_motif"/>
</dbReference>
<dbReference type="InterPro" id="IPR012340">
    <property type="entry name" value="NA-bd_OB-fold"/>
</dbReference>
<dbReference type="InterPro" id="IPR004150">
    <property type="entry name" value="NAD_DNA_ligase_OB"/>
</dbReference>
<dbReference type="InterPro" id="IPR010994">
    <property type="entry name" value="RuvA_2-like"/>
</dbReference>
<dbReference type="InterPro" id="IPR004149">
    <property type="entry name" value="Znf_DNAligase_C4"/>
</dbReference>
<dbReference type="NCBIfam" id="TIGR00575">
    <property type="entry name" value="dnlj"/>
    <property type="match status" value="1"/>
</dbReference>
<dbReference type="NCBIfam" id="NF005932">
    <property type="entry name" value="PRK07956.1"/>
    <property type="match status" value="1"/>
</dbReference>
<dbReference type="PANTHER" id="PTHR23389">
    <property type="entry name" value="CHROMOSOME TRANSMISSION FIDELITY FACTOR 18"/>
    <property type="match status" value="1"/>
</dbReference>
<dbReference type="PANTHER" id="PTHR23389:SF9">
    <property type="entry name" value="DNA LIGASE"/>
    <property type="match status" value="1"/>
</dbReference>
<dbReference type="Pfam" id="PF00533">
    <property type="entry name" value="BRCT"/>
    <property type="match status" value="1"/>
</dbReference>
<dbReference type="Pfam" id="PF01653">
    <property type="entry name" value="DNA_ligase_aden"/>
    <property type="match status" value="1"/>
</dbReference>
<dbReference type="Pfam" id="PF03120">
    <property type="entry name" value="DNA_ligase_OB"/>
    <property type="match status" value="1"/>
</dbReference>
<dbReference type="Pfam" id="PF03119">
    <property type="entry name" value="DNA_ligase_ZBD"/>
    <property type="match status" value="1"/>
</dbReference>
<dbReference type="Pfam" id="PF12826">
    <property type="entry name" value="HHH_2"/>
    <property type="match status" value="1"/>
</dbReference>
<dbReference type="Pfam" id="PF22745">
    <property type="entry name" value="Nlig-Ia"/>
    <property type="match status" value="1"/>
</dbReference>
<dbReference type="PIRSF" id="PIRSF001604">
    <property type="entry name" value="LigA"/>
    <property type="match status" value="1"/>
</dbReference>
<dbReference type="SMART" id="SM00292">
    <property type="entry name" value="BRCT"/>
    <property type="match status" value="1"/>
</dbReference>
<dbReference type="SMART" id="SM00278">
    <property type="entry name" value="HhH1"/>
    <property type="match status" value="3"/>
</dbReference>
<dbReference type="SMART" id="SM00532">
    <property type="entry name" value="LIGANc"/>
    <property type="match status" value="1"/>
</dbReference>
<dbReference type="SUPFAM" id="SSF52113">
    <property type="entry name" value="BRCT domain"/>
    <property type="match status" value="1"/>
</dbReference>
<dbReference type="SUPFAM" id="SSF56091">
    <property type="entry name" value="DNA ligase/mRNA capping enzyme, catalytic domain"/>
    <property type="match status" value="1"/>
</dbReference>
<dbReference type="SUPFAM" id="SSF50249">
    <property type="entry name" value="Nucleic acid-binding proteins"/>
    <property type="match status" value="1"/>
</dbReference>
<dbReference type="SUPFAM" id="SSF47781">
    <property type="entry name" value="RuvA domain 2-like"/>
    <property type="match status" value="1"/>
</dbReference>
<dbReference type="PROSITE" id="PS50172">
    <property type="entry name" value="BRCT"/>
    <property type="match status" value="1"/>
</dbReference>
<dbReference type="PROSITE" id="PS01055">
    <property type="entry name" value="DNA_LIGASE_N1"/>
    <property type="match status" value="1"/>
</dbReference>
<dbReference type="PROSITE" id="PS01056">
    <property type="entry name" value="DNA_LIGASE_N2"/>
    <property type="match status" value="1"/>
</dbReference>
<protein>
    <recommendedName>
        <fullName evidence="1">DNA ligase</fullName>
        <ecNumber evidence="1">6.5.1.2</ecNumber>
    </recommendedName>
    <alternativeName>
        <fullName evidence="1">Polydeoxyribonucleotide synthase [NAD(+)]</fullName>
    </alternativeName>
</protein>
<organism>
    <name type="scientific">Anaeromyxobacter dehalogenans (strain 2CP-1 / ATCC BAA-258)</name>
    <dbReference type="NCBI Taxonomy" id="455488"/>
    <lineage>
        <taxon>Bacteria</taxon>
        <taxon>Pseudomonadati</taxon>
        <taxon>Myxococcota</taxon>
        <taxon>Myxococcia</taxon>
        <taxon>Myxococcales</taxon>
        <taxon>Cystobacterineae</taxon>
        <taxon>Anaeromyxobacteraceae</taxon>
        <taxon>Anaeromyxobacter</taxon>
    </lineage>
</organism>
<comment type="function">
    <text evidence="1">DNA ligase that catalyzes the formation of phosphodiester linkages between 5'-phosphoryl and 3'-hydroxyl groups in double-stranded DNA using NAD as a coenzyme and as the energy source for the reaction. It is essential for DNA replication and repair of damaged DNA.</text>
</comment>
<comment type="catalytic activity">
    <reaction evidence="1">
        <text>NAD(+) + (deoxyribonucleotide)n-3'-hydroxyl + 5'-phospho-(deoxyribonucleotide)m = (deoxyribonucleotide)n+m + AMP + beta-nicotinamide D-nucleotide.</text>
        <dbReference type="EC" id="6.5.1.2"/>
    </reaction>
</comment>
<comment type="cofactor">
    <cofactor evidence="1">
        <name>Mg(2+)</name>
        <dbReference type="ChEBI" id="CHEBI:18420"/>
    </cofactor>
    <cofactor evidence="1">
        <name>Mn(2+)</name>
        <dbReference type="ChEBI" id="CHEBI:29035"/>
    </cofactor>
</comment>
<comment type="similarity">
    <text evidence="1">Belongs to the NAD-dependent DNA ligase family. LigA subfamily.</text>
</comment>
<gene>
    <name evidence="1" type="primary">ligA</name>
    <name type="ordered locus">A2cp1_0729</name>
</gene>
<name>DNLJ_ANAD2</name>
<feature type="chain" id="PRO_0000380288" description="DNA ligase">
    <location>
        <begin position="1"/>
        <end position="687"/>
    </location>
</feature>
<feature type="domain" description="BRCT" evidence="1">
    <location>
        <begin position="609"/>
        <end position="687"/>
    </location>
</feature>
<feature type="active site" description="N6-AMP-lysine intermediate" evidence="1">
    <location>
        <position position="119"/>
    </location>
</feature>
<feature type="binding site" evidence="1">
    <location>
        <begin position="34"/>
        <end position="38"/>
    </location>
    <ligand>
        <name>NAD(+)</name>
        <dbReference type="ChEBI" id="CHEBI:57540"/>
    </ligand>
</feature>
<feature type="binding site" evidence="1">
    <location>
        <begin position="83"/>
        <end position="84"/>
    </location>
    <ligand>
        <name>NAD(+)</name>
        <dbReference type="ChEBI" id="CHEBI:57540"/>
    </ligand>
</feature>
<feature type="binding site" evidence="1">
    <location>
        <position position="117"/>
    </location>
    <ligand>
        <name>NAD(+)</name>
        <dbReference type="ChEBI" id="CHEBI:57540"/>
    </ligand>
</feature>
<feature type="binding site" evidence="1">
    <location>
        <position position="140"/>
    </location>
    <ligand>
        <name>NAD(+)</name>
        <dbReference type="ChEBI" id="CHEBI:57540"/>
    </ligand>
</feature>
<feature type="binding site" evidence="1">
    <location>
        <position position="182"/>
    </location>
    <ligand>
        <name>NAD(+)</name>
        <dbReference type="ChEBI" id="CHEBI:57540"/>
    </ligand>
</feature>
<feature type="binding site" evidence="1">
    <location>
        <position position="298"/>
    </location>
    <ligand>
        <name>NAD(+)</name>
        <dbReference type="ChEBI" id="CHEBI:57540"/>
    </ligand>
</feature>
<feature type="binding site" evidence="1">
    <location>
        <position position="322"/>
    </location>
    <ligand>
        <name>NAD(+)</name>
        <dbReference type="ChEBI" id="CHEBI:57540"/>
    </ligand>
</feature>
<feature type="binding site" evidence="1">
    <location>
        <position position="416"/>
    </location>
    <ligand>
        <name>Zn(2+)</name>
        <dbReference type="ChEBI" id="CHEBI:29105"/>
    </ligand>
</feature>
<feature type="binding site" evidence="1">
    <location>
        <position position="419"/>
    </location>
    <ligand>
        <name>Zn(2+)</name>
        <dbReference type="ChEBI" id="CHEBI:29105"/>
    </ligand>
</feature>
<feature type="binding site" evidence="1">
    <location>
        <position position="434"/>
    </location>
    <ligand>
        <name>Zn(2+)</name>
        <dbReference type="ChEBI" id="CHEBI:29105"/>
    </ligand>
</feature>
<feature type="binding site" evidence="1">
    <location>
        <position position="439"/>
    </location>
    <ligand>
        <name>Zn(2+)</name>
        <dbReference type="ChEBI" id="CHEBI:29105"/>
    </ligand>
</feature>